<organism>
    <name type="scientific">Psychrobacter arcticus (strain DSM 17307 / VKM B-2377 / 273-4)</name>
    <dbReference type="NCBI Taxonomy" id="259536"/>
    <lineage>
        <taxon>Bacteria</taxon>
        <taxon>Pseudomonadati</taxon>
        <taxon>Pseudomonadota</taxon>
        <taxon>Gammaproteobacteria</taxon>
        <taxon>Moraxellales</taxon>
        <taxon>Moraxellaceae</taxon>
        <taxon>Psychrobacter</taxon>
    </lineage>
</organism>
<feature type="chain" id="PRO_0000242200" description="Peptide chain release factor 3">
    <location>
        <begin position="1"/>
        <end position="531"/>
    </location>
</feature>
<feature type="domain" description="tr-type G">
    <location>
        <begin position="13"/>
        <end position="282"/>
    </location>
</feature>
<feature type="binding site" evidence="1">
    <location>
        <begin position="22"/>
        <end position="29"/>
    </location>
    <ligand>
        <name>GTP</name>
        <dbReference type="ChEBI" id="CHEBI:37565"/>
    </ligand>
</feature>
<feature type="binding site" evidence="1">
    <location>
        <begin position="90"/>
        <end position="94"/>
    </location>
    <ligand>
        <name>GTP</name>
        <dbReference type="ChEBI" id="CHEBI:37565"/>
    </ligand>
</feature>
<feature type="binding site" evidence="1">
    <location>
        <begin position="144"/>
        <end position="147"/>
    </location>
    <ligand>
        <name>GTP</name>
        <dbReference type="ChEBI" id="CHEBI:37565"/>
    </ligand>
</feature>
<accession>Q4FUQ9</accession>
<sequence length="531" mass="59890">MSVDPKKLNKEVAKRRTFAIISHPDAGKTTMTEKLLLWGQAIQVVGEVKGRKTDRHATSDWMSMEQERGISITTSVMQFPYQEHVVNLLDTPGHADFSEDTYRTLTAVDSALMMVDGAKGVEERTIKLMEVCRMRDTPIISFVNKLDRQIREPLELLSEIEAVLKIKCIPITWPIGMGQDFVGVYHLTENKTYFYEKGRGGEMTVSETREGYDYPDIRERLGALMFASFEESLELVQMALEDFDVDEFLAGEMTPVLFGTALGNFGVNMVLDTLIKYSPPPKAHPTNEREVAATETTFSGFVFKIQANMDPRHRDRIAFLRVCSGKYEKGMKLKHVRLGKDVRIADALTFLAGDRAALEEAYPGDIIGLHNHGTISIGDSFTEGEELNFTGIPHFAPELFRRVILKDPLKSKALQKGLQQLSEEGATQVFMPQINNDLILGAVGVLQFEVVAHRLKEEYKVQCIFEPVSIATVRWIHCDDEVALAKFKRKAHDQLSLDGGGHLTYLAPSRVNLQLMQDRYPEVTFSNTREH</sequence>
<proteinExistence type="inferred from homology"/>
<keyword id="KW-0963">Cytoplasm</keyword>
<keyword id="KW-0342">GTP-binding</keyword>
<keyword id="KW-0547">Nucleotide-binding</keyword>
<keyword id="KW-0648">Protein biosynthesis</keyword>
<keyword id="KW-1185">Reference proteome</keyword>
<reference key="1">
    <citation type="journal article" date="2010" name="Appl. Environ. Microbiol.">
        <title>The genome sequence of Psychrobacter arcticus 273-4, a psychroactive Siberian permafrost bacterium, reveals mechanisms for adaptation to low-temperature growth.</title>
        <authorList>
            <person name="Ayala-del-Rio H.L."/>
            <person name="Chain P.S."/>
            <person name="Grzymski J.J."/>
            <person name="Ponder M.A."/>
            <person name="Ivanova N."/>
            <person name="Bergholz P.W."/>
            <person name="Di Bartolo G."/>
            <person name="Hauser L."/>
            <person name="Land M."/>
            <person name="Bakermans C."/>
            <person name="Rodrigues D."/>
            <person name="Klappenbach J."/>
            <person name="Zarka D."/>
            <person name="Larimer F."/>
            <person name="Richardson P."/>
            <person name="Murray A."/>
            <person name="Thomashow M."/>
            <person name="Tiedje J.M."/>
        </authorList>
    </citation>
    <scope>NUCLEOTIDE SEQUENCE [LARGE SCALE GENOMIC DNA]</scope>
    <source>
        <strain>DSM 17307 / VKM B-2377 / 273-4</strain>
    </source>
</reference>
<comment type="function">
    <text evidence="1">Increases the formation of ribosomal termination complexes and stimulates activities of RF-1 and RF-2. It binds guanine nucleotides and has strong preference for UGA stop codons. It may interact directly with the ribosome. The stimulation of RF-1 and RF-2 is significantly reduced by GTP and GDP, but not by GMP.</text>
</comment>
<comment type="subcellular location">
    <subcellularLocation>
        <location evidence="1">Cytoplasm</location>
    </subcellularLocation>
</comment>
<comment type="similarity">
    <text evidence="1">Belongs to the TRAFAC class translation factor GTPase superfamily. Classic translation factor GTPase family. PrfC subfamily.</text>
</comment>
<name>RF3_PSYA2</name>
<dbReference type="EMBL" id="CP000082">
    <property type="protein sequence ID" value="AAZ18249.1"/>
    <property type="molecule type" value="Genomic_DNA"/>
</dbReference>
<dbReference type="RefSeq" id="WP_011279687.1">
    <property type="nucleotide sequence ID" value="NC_007204.1"/>
</dbReference>
<dbReference type="SMR" id="Q4FUQ9"/>
<dbReference type="STRING" id="259536.Psyc_0380"/>
<dbReference type="KEGG" id="par:Psyc_0380"/>
<dbReference type="eggNOG" id="COG4108">
    <property type="taxonomic scope" value="Bacteria"/>
</dbReference>
<dbReference type="HOGENOM" id="CLU_002794_2_1_6"/>
<dbReference type="OrthoDB" id="9801472at2"/>
<dbReference type="Proteomes" id="UP000000546">
    <property type="component" value="Chromosome"/>
</dbReference>
<dbReference type="GO" id="GO:0005829">
    <property type="term" value="C:cytosol"/>
    <property type="evidence" value="ECO:0007669"/>
    <property type="project" value="TreeGrafter"/>
</dbReference>
<dbReference type="GO" id="GO:0005525">
    <property type="term" value="F:GTP binding"/>
    <property type="evidence" value="ECO:0007669"/>
    <property type="project" value="UniProtKB-UniRule"/>
</dbReference>
<dbReference type="GO" id="GO:0003924">
    <property type="term" value="F:GTPase activity"/>
    <property type="evidence" value="ECO:0007669"/>
    <property type="project" value="InterPro"/>
</dbReference>
<dbReference type="GO" id="GO:0097216">
    <property type="term" value="F:guanosine tetraphosphate binding"/>
    <property type="evidence" value="ECO:0007669"/>
    <property type="project" value="UniProtKB-ARBA"/>
</dbReference>
<dbReference type="GO" id="GO:0016150">
    <property type="term" value="F:translation release factor activity, codon nonspecific"/>
    <property type="evidence" value="ECO:0007669"/>
    <property type="project" value="TreeGrafter"/>
</dbReference>
<dbReference type="GO" id="GO:0016149">
    <property type="term" value="F:translation release factor activity, codon specific"/>
    <property type="evidence" value="ECO:0007669"/>
    <property type="project" value="UniProtKB-UniRule"/>
</dbReference>
<dbReference type="GO" id="GO:0006449">
    <property type="term" value="P:regulation of translational termination"/>
    <property type="evidence" value="ECO:0007669"/>
    <property type="project" value="UniProtKB-UniRule"/>
</dbReference>
<dbReference type="CDD" id="cd04169">
    <property type="entry name" value="RF3"/>
    <property type="match status" value="1"/>
</dbReference>
<dbReference type="CDD" id="cd03689">
    <property type="entry name" value="RF3_II"/>
    <property type="match status" value="1"/>
</dbReference>
<dbReference type="CDD" id="cd16259">
    <property type="entry name" value="RF3_III"/>
    <property type="match status" value="1"/>
</dbReference>
<dbReference type="FunFam" id="3.30.70.3280:FF:000001">
    <property type="entry name" value="Peptide chain release factor 3"/>
    <property type="match status" value="1"/>
</dbReference>
<dbReference type="FunFam" id="3.40.50.300:FF:000542">
    <property type="entry name" value="Peptide chain release factor 3"/>
    <property type="match status" value="1"/>
</dbReference>
<dbReference type="Gene3D" id="3.40.50.300">
    <property type="entry name" value="P-loop containing nucleotide triphosphate hydrolases"/>
    <property type="match status" value="2"/>
</dbReference>
<dbReference type="Gene3D" id="3.30.70.3280">
    <property type="entry name" value="Peptide chain release factor 3, domain III"/>
    <property type="match status" value="1"/>
</dbReference>
<dbReference type="HAMAP" id="MF_00072">
    <property type="entry name" value="Rel_fac_3"/>
    <property type="match status" value="1"/>
</dbReference>
<dbReference type="InterPro" id="IPR053905">
    <property type="entry name" value="EF-G-like_DII"/>
</dbReference>
<dbReference type="InterPro" id="IPR035647">
    <property type="entry name" value="EFG_III/V"/>
</dbReference>
<dbReference type="InterPro" id="IPR031157">
    <property type="entry name" value="G_TR_CS"/>
</dbReference>
<dbReference type="InterPro" id="IPR027417">
    <property type="entry name" value="P-loop_NTPase"/>
</dbReference>
<dbReference type="InterPro" id="IPR004548">
    <property type="entry name" value="PrfC"/>
</dbReference>
<dbReference type="InterPro" id="IPR032090">
    <property type="entry name" value="RF3_C"/>
</dbReference>
<dbReference type="InterPro" id="IPR038467">
    <property type="entry name" value="RF3_dom_3_sf"/>
</dbReference>
<dbReference type="InterPro" id="IPR041732">
    <property type="entry name" value="RF3_GTP-bd"/>
</dbReference>
<dbReference type="InterPro" id="IPR005225">
    <property type="entry name" value="Small_GTP-bd"/>
</dbReference>
<dbReference type="InterPro" id="IPR000795">
    <property type="entry name" value="T_Tr_GTP-bd_dom"/>
</dbReference>
<dbReference type="InterPro" id="IPR009000">
    <property type="entry name" value="Transl_B-barrel_sf"/>
</dbReference>
<dbReference type="NCBIfam" id="TIGR00503">
    <property type="entry name" value="prfC"/>
    <property type="match status" value="1"/>
</dbReference>
<dbReference type="NCBIfam" id="NF001964">
    <property type="entry name" value="PRK00741.1"/>
    <property type="match status" value="1"/>
</dbReference>
<dbReference type="NCBIfam" id="TIGR00231">
    <property type="entry name" value="small_GTP"/>
    <property type="match status" value="1"/>
</dbReference>
<dbReference type="PANTHER" id="PTHR43556">
    <property type="entry name" value="PEPTIDE CHAIN RELEASE FACTOR RF3"/>
    <property type="match status" value="1"/>
</dbReference>
<dbReference type="PANTHER" id="PTHR43556:SF2">
    <property type="entry name" value="PEPTIDE CHAIN RELEASE FACTOR RF3"/>
    <property type="match status" value="1"/>
</dbReference>
<dbReference type="Pfam" id="PF22042">
    <property type="entry name" value="EF-G_D2"/>
    <property type="match status" value="1"/>
</dbReference>
<dbReference type="Pfam" id="PF00009">
    <property type="entry name" value="GTP_EFTU"/>
    <property type="match status" value="1"/>
</dbReference>
<dbReference type="Pfam" id="PF16658">
    <property type="entry name" value="RF3_C"/>
    <property type="match status" value="1"/>
</dbReference>
<dbReference type="PRINTS" id="PR00315">
    <property type="entry name" value="ELONGATNFCT"/>
</dbReference>
<dbReference type="SUPFAM" id="SSF54980">
    <property type="entry name" value="EF-G C-terminal domain-like"/>
    <property type="match status" value="1"/>
</dbReference>
<dbReference type="SUPFAM" id="SSF52540">
    <property type="entry name" value="P-loop containing nucleoside triphosphate hydrolases"/>
    <property type="match status" value="1"/>
</dbReference>
<dbReference type="SUPFAM" id="SSF50447">
    <property type="entry name" value="Translation proteins"/>
    <property type="match status" value="1"/>
</dbReference>
<dbReference type="PROSITE" id="PS00301">
    <property type="entry name" value="G_TR_1"/>
    <property type="match status" value="1"/>
</dbReference>
<dbReference type="PROSITE" id="PS51722">
    <property type="entry name" value="G_TR_2"/>
    <property type="match status" value="1"/>
</dbReference>
<evidence type="ECO:0000255" key="1">
    <source>
        <dbReference type="HAMAP-Rule" id="MF_00072"/>
    </source>
</evidence>
<gene>
    <name evidence="1" type="primary">prfC</name>
    <name type="ordered locus">Psyc_0380</name>
</gene>
<protein>
    <recommendedName>
        <fullName evidence="1">Peptide chain release factor 3</fullName>
        <shortName evidence="1">RF-3</shortName>
    </recommendedName>
</protein>